<comment type="function">
    <text evidence="1">Together with LptD, is involved in the assembly of lipopolysaccharide (LPS) at the surface of the outer membrane. Required for the proper assembly of LptD. Binds LPS and may serve as the LPS recognition site at the outer membrane.</text>
</comment>
<comment type="subunit">
    <text evidence="1">Component of the lipopolysaccharide transport and assembly complex. Interacts with LptD.</text>
</comment>
<comment type="subcellular location">
    <subcellularLocation>
        <location evidence="1">Cell outer membrane</location>
        <topology evidence="1">Lipid-anchor</topology>
    </subcellularLocation>
</comment>
<comment type="similarity">
    <text evidence="1">Belongs to the LptE lipoprotein family.</text>
</comment>
<proteinExistence type="inferred from homology"/>
<dbReference type="EMBL" id="AE014075">
    <property type="protein sequence ID" value="AAN79205.1"/>
    <property type="molecule type" value="Genomic_DNA"/>
</dbReference>
<dbReference type="RefSeq" id="WP_001269673.1">
    <property type="nucleotide sequence ID" value="NZ_CP051263.1"/>
</dbReference>
<dbReference type="SMR" id="P0ADC2"/>
<dbReference type="STRING" id="199310.c0732"/>
<dbReference type="GeneID" id="93776841"/>
<dbReference type="KEGG" id="ecc:c0732"/>
<dbReference type="eggNOG" id="COG2980">
    <property type="taxonomic scope" value="Bacteria"/>
</dbReference>
<dbReference type="HOGENOM" id="CLU_103309_1_1_6"/>
<dbReference type="BioCyc" id="ECOL199310:C0732-MONOMER"/>
<dbReference type="Proteomes" id="UP000001410">
    <property type="component" value="Chromosome"/>
</dbReference>
<dbReference type="GO" id="GO:0009279">
    <property type="term" value="C:cell outer membrane"/>
    <property type="evidence" value="ECO:0007669"/>
    <property type="project" value="UniProtKB-SubCell"/>
</dbReference>
<dbReference type="GO" id="GO:1990351">
    <property type="term" value="C:transporter complex"/>
    <property type="evidence" value="ECO:0007669"/>
    <property type="project" value="TreeGrafter"/>
</dbReference>
<dbReference type="GO" id="GO:0001530">
    <property type="term" value="F:lipopolysaccharide binding"/>
    <property type="evidence" value="ECO:0007669"/>
    <property type="project" value="TreeGrafter"/>
</dbReference>
<dbReference type="GO" id="GO:0043165">
    <property type="term" value="P:Gram-negative-bacterium-type cell outer membrane assembly"/>
    <property type="evidence" value="ECO:0007669"/>
    <property type="project" value="UniProtKB-UniRule"/>
</dbReference>
<dbReference type="GO" id="GO:0015920">
    <property type="term" value="P:lipopolysaccharide transport"/>
    <property type="evidence" value="ECO:0007669"/>
    <property type="project" value="TreeGrafter"/>
</dbReference>
<dbReference type="FunFam" id="3.30.160.150:FF:000001">
    <property type="entry name" value="LPS-assembly lipoprotein LptE"/>
    <property type="match status" value="1"/>
</dbReference>
<dbReference type="Gene3D" id="3.30.160.150">
    <property type="entry name" value="Lipoprotein like domain"/>
    <property type="match status" value="1"/>
</dbReference>
<dbReference type="HAMAP" id="MF_01186">
    <property type="entry name" value="LPS_assembly_LptE"/>
    <property type="match status" value="1"/>
</dbReference>
<dbReference type="InterPro" id="IPR007485">
    <property type="entry name" value="LPS_assembly_LptE"/>
</dbReference>
<dbReference type="NCBIfam" id="NF008062">
    <property type="entry name" value="PRK10796.1"/>
    <property type="match status" value="1"/>
</dbReference>
<dbReference type="PANTHER" id="PTHR38098">
    <property type="entry name" value="LPS-ASSEMBLY LIPOPROTEIN LPTE"/>
    <property type="match status" value="1"/>
</dbReference>
<dbReference type="PANTHER" id="PTHR38098:SF1">
    <property type="entry name" value="LPS-ASSEMBLY LIPOPROTEIN LPTE"/>
    <property type="match status" value="1"/>
</dbReference>
<dbReference type="Pfam" id="PF04390">
    <property type="entry name" value="LptE"/>
    <property type="match status" value="1"/>
</dbReference>
<dbReference type="PROSITE" id="PS51257">
    <property type="entry name" value="PROKAR_LIPOPROTEIN"/>
    <property type="match status" value="1"/>
</dbReference>
<gene>
    <name evidence="1" type="primary">lptE</name>
    <name type="synonym">rlpB</name>
    <name type="ordered locus">c0732</name>
</gene>
<sequence>MRYLATLLLSLAVLITAGCGWHLRDTTQVPSTMKVMILDSGDPNGPLSRAVRNQLRLNGVELLDKETTRKDVPSLRLGKVSIAKDTASVFRNGQTAEYQMIMTVNATVLIPGRDIYPISAKVFRSFFDNPQMALAKDNEQDMIVKEMYDRAAEQLIRKLPSIRAADIRSDEEQTSTTTDTPATPARVSTTLGN</sequence>
<name>LPTE_ECOL6</name>
<accession>P0ADC2</accession>
<accession>P10101</accession>
<accession>P77576</accession>
<keyword id="KW-0998">Cell outer membrane</keyword>
<keyword id="KW-0449">Lipoprotein</keyword>
<keyword id="KW-0472">Membrane</keyword>
<keyword id="KW-0564">Palmitate</keyword>
<keyword id="KW-1185">Reference proteome</keyword>
<keyword id="KW-0732">Signal</keyword>
<organism>
    <name type="scientific">Escherichia coli O6:H1 (strain CFT073 / ATCC 700928 / UPEC)</name>
    <dbReference type="NCBI Taxonomy" id="199310"/>
    <lineage>
        <taxon>Bacteria</taxon>
        <taxon>Pseudomonadati</taxon>
        <taxon>Pseudomonadota</taxon>
        <taxon>Gammaproteobacteria</taxon>
        <taxon>Enterobacterales</taxon>
        <taxon>Enterobacteriaceae</taxon>
        <taxon>Escherichia</taxon>
    </lineage>
</organism>
<protein>
    <recommendedName>
        <fullName evidence="1">LPS-assembly lipoprotein LptE</fullName>
    </recommendedName>
</protein>
<feature type="signal peptide" evidence="1">
    <location>
        <begin position="1"/>
        <end position="18"/>
    </location>
</feature>
<feature type="chain" id="PRO_0000043195" description="LPS-assembly lipoprotein LptE">
    <location>
        <begin position="19"/>
        <end position="193"/>
    </location>
</feature>
<feature type="region of interest" description="Disordered" evidence="2">
    <location>
        <begin position="166"/>
        <end position="193"/>
    </location>
</feature>
<feature type="compositionally biased region" description="Low complexity" evidence="2">
    <location>
        <begin position="174"/>
        <end position="186"/>
    </location>
</feature>
<feature type="lipid moiety-binding region" description="N-palmitoyl cysteine" evidence="1">
    <location>
        <position position="19"/>
    </location>
</feature>
<feature type="lipid moiety-binding region" description="S-diacylglycerol cysteine" evidence="1">
    <location>
        <position position="19"/>
    </location>
</feature>
<reference key="1">
    <citation type="journal article" date="2002" name="Proc. Natl. Acad. Sci. U.S.A.">
        <title>Extensive mosaic structure revealed by the complete genome sequence of uropathogenic Escherichia coli.</title>
        <authorList>
            <person name="Welch R.A."/>
            <person name="Burland V."/>
            <person name="Plunkett G. III"/>
            <person name="Redford P."/>
            <person name="Roesch P."/>
            <person name="Rasko D."/>
            <person name="Buckles E.L."/>
            <person name="Liou S.-R."/>
            <person name="Boutin A."/>
            <person name="Hackett J."/>
            <person name="Stroud D."/>
            <person name="Mayhew G.F."/>
            <person name="Rose D.J."/>
            <person name="Zhou S."/>
            <person name="Schwartz D.C."/>
            <person name="Perna N.T."/>
            <person name="Mobley H.L.T."/>
            <person name="Donnenberg M.S."/>
            <person name="Blattner F.R."/>
        </authorList>
    </citation>
    <scope>NUCLEOTIDE SEQUENCE [LARGE SCALE GENOMIC DNA]</scope>
    <source>
        <strain>CFT073 / ATCC 700928 / UPEC</strain>
    </source>
</reference>
<evidence type="ECO:0000255" key="1">
    <source>
        <dbReference type="HAMAP-Rule" id="MF_01186"/>
    </source>
</evidence>
<evidence type="ECO:0000256" key="2">
    <source>
        <dbReference type="SAM" id="MobiDB-lite"/>
    </source>
</evidence>